<reference key="1">
    <citation type="journal article" date="2005" name="Nature">
        <title>The genome of the social amoeba Dictyostelium discoideum.</title>
        <authorList>
            <person name="Eichinger L."/>
            <person name="Pachebat J.A."/>
            <person name="Gloeckner G."/>
            <person name="Rajandream M.A."/>
            <person name="Sucgang R."/>
            <person name="Berriman M."/>
            <person name="Song J."/>
            <person name="Olsen R."/>
            <person name="Szafranski K."/>
            <person name="Xu Q."/>
            <person name="Tunggal B."/>
            <person name="Kummerfeld S."/>
            <person name="Madera M."/>
            <person name="Konfortov B.A."/>
            <person name="Rivero F."/>
            <person name="Bankier A.T."/>
            <person name="Lehmann R."/>
            <person name="Hamlin N."/>
            <person name="Davies R."/>
            <person name="Gaudet P."/>
            <person name="Fey P."/>
            <person name="Pilcher K."/>
            <person name="Chen G."/>
            <person name="Saunders D."/>
            <person name="Sodergren E.J."/>
            <person name="Davis P."/>
            <person name="Kerhornou A."/>
            <person name="Nie X."/>
            <person name="Hall N."/>
            <person name="Anjard C."/>
            <person name="Hemphill L."/>
            <person name="Bason N."/>
            <person name="Farbrother P."/>
            <person name="Desany B."/>
            <person name="Just E."/>
            <person name="Morio T."/>
            <person name="Rost R."/>
            <person name="Churcher C.M."/>
            <person name="Cooper J."/>
            <person name="Haydock S."/>
            <person name="van Driessche N."/>
            <person name="Cronin A."/>
            <person name="Goodhead I."/>
            <person name="Muzny D.M."/>
            <person name="Mourier T."/>
            <person name="Pain A."/>
            <person name="Lu M."/>
            <person name="Harper D."/>
            <person name="Lindsay R."/>
            <person name="Hauser H."/>
            <person name="James K.D."/>
            <person name="Quiles M."/>
            <person name="Madan Babu M."/>
            <person name="Saito T."/>
            <person name="Buchrieser C."/>
            <person name="Wardroper A."/>
            <person name="Felder M."/>
            <person name="Thangavelu M."/>
            <person name="Johnson D."/>
            <person name="Knights A."/>
            <person name="Loulseged H."/>
            <person name="Mungall K.L."/>
            <person name="Oliver K."/>
            <person name="Price C."/>
            <person name="Quail M.A."/>
            <person name="Urushihara H."/>
            <person name="Hernandez J."/>
            <person name="Rabbinowitsch E."/>
            <person name="Steffen D."/>
            <person name="Sanders M."/>
            <person name="Ma J."/>
            <person name="Kohara Y."/>
            <person name="Sharp S."/>
            <person name="Simmonds M.N."/>
            <person name="Spiegler S."/>
            <person name="Tivey A."/>
            <person name="Sugano S."/>
            <person name="White B."/>
            <person name="Walker D."/>
            <person name="Woodward J.R."/>
            <person name="Winckler T."/>
            <person name="Tanaka Y."/>
            <person name="Shaulsky G."/>
            <person name="Schleicher M."/>
            <person name="Weinstock G.M."/>
            <person name="Rosenthal A."/>
            <person name="Cox E.C."/>
            <person name="Chisholm R.L."/>
            <person name="Gibbs R.A."/>
            <person name="Loomis W.F."/>
            <person name="Platzer M."/>
            <person name="Kay R.R."/>
            <person name="Williams J.G."/>
            <person name="Dear P.H."/>
            <person name="Noegel A.A."/>
            <person name="Barrell B.G."/>
            <person name="Kuspa A."/>
        </authorList>
    </citation>
    <scope>NUCLEOTIDE SEQUENCE [LARGE SCALE GENOMIC DNA]</scope>
    <source>
        <strain>AX4</strain>
    </source>
</reference>
<gene>
    <name type="primary">atg17</name>
    <name type="ORF">DDB_G0295673</name>
</gene>
<evidence type="ECO:0000250" key="1"/>
<evidence type="ECO:0000256" key="2">
    <source>
        <dbReference type="SAM" id="MobiDB-lite"/>
    </source>
</evidence>
<evidence type="ECO:0000305" key="3"/>
<comment type="function">
    <text evidence="1">Autophagy-specific protein that functions in response to autophagy-inducing signals as a scaffold to recruit other ATG proteins to organize pre-autophagosomal structure (PAS) formation. Modulates the timing and magnitude of the autophagy response, such as the size of the sequestering vesicles. Plays particularly a role in pexophagy and nucleophagy (By similarity).</text>
</comment>
<comment type="subcellular location">
    <subcellularLocation>
        <location evidence="1">Cytoplasm</location>
    </subcellularLocation>
    <subcellularLocation>
        <location evidence="1">Preautophagosomal structure membrane</location>
        <topology evidence="1">Peripheral membrane protein</topology>
    </subcellularLocation>
</comment>
<comment type="similarity">
    <text evidence="3">Belongs to the ATG17 family.</text>
</comment>
<feature type="chain" id="PRO_0000367254" description="Probable autophagy-related protein 17">
    <location>
        <begin position="1"/>
        <end position="488"/>
    </location>
</feature>
<feature type="region of interest" description="Disordered" evidence="2">
    <location>
        <begin position="103"/>
        <end position="150"/>
    </location>
</feature>
<feature type="region of interest" description="Disordered" evidence="2">
    <location>
        <begin position="257"/>
        <end position="284"/>
    </location>
</feature>
<feature type="compositionally biased region" description="Low complexity" evidence="2">
    <location>
        <begin position="105"/>
        <end position="126"/>
    </location>
</feature>
<feature type="compositionally biased region" description="Low complexity" evidence="2">
    <location>
        <begin position="134"/>
        <end position="150"/>
    </location>
</feature>
<feature type="compositionally biased region" description="Low complexity" evidence="2">
    <location>
        <begin position="265"/>
        <end position="279"/>
    </location>
</feature>
<dbReference type="EMBL" id="AAFI02000046">
    <property type="protein sequence ID" value="EDR41068.1"/>
    <property type="molecule type" value="Genomic_DNA"/>
</dbReference>
<dbReference type="RefSeq" id="XP_001733002.1">
    <property type="nucleotide sequence ID" value="XM_001732950.1"/>
</dbReference>
<dbReference type="SMR" id="B0G140"/>
<dbReference type="FunCoup" id="B0G140">
    <property type="interactions" value="16"/>
</dbReference>
<dbReference type="STRING" id="44689.B0G140"/>
<dbReference type="PaxDb" id="44689-DDB0237867"/>
<dbReference type="EnsemblProtists" id="EDR41068">
    <property type="protein sequence ID" value="EDR41068"/>
    <property type="gene ID" value="DDB_G0295673"/>
</dbReference>
<dbReference type="GeneID" id="8623455"/>
<dbReference type="KEGG" id="ddi:DDB_G0295673"/>
<dbReference type="dictyBase" id="DDB_G0295673">
    <property type="gene designation" value="atg17"/>
</dbReference>
<dbReference type="VEuPathDB" id="AmoebaDB:DDB_G0295673"/>
<dbReference type="eggNOG" id="ENOG502RW78">
    <property type="taxonomic scope" value="Eukaryota"/>
</dbReference>
<dbReference type="HOGENOM" id="CLU_559506_0_0_1"/>
<dbReference type="InParanoid" id="B0G140"/>
<dbReference type="OMA" id="QCDFITF"/>
<dbReference type="PRO" id="PR:B0G140"/>
<dbReference type="Proteomes" id="UP000002195">
    <property type="component" value="Chromosome 3"/>
</dbReference>
<dbReference type="GO" id="GO:1990316">
    <property type="term" value="C:Atg1/ULK1 kinase complex"/>
    <property type="evidence" value="ECO:0000318"/>
    <property type="project" value="GO_Central"/>
</dbReference>
<dbReference type="GO" id="GO:0005634">
    <property type="term" value="C:nucleus"/>
    <property type="evidence" value="ECO:0000314"/>
    <property type="project" value="dictyBase"/>
</dbReference>
<dbReference type="GO" id="GO:0000407">
    <property type="term" value="C:phagophore assembly site"/>
    <property type="evidence" value="ECO:0000318"/>
    <property type="project" value="GO_Central"/>
</dbReference>
<dbReference type="GO" id="GO:0034045">
    <property type="term" value="C:phagophore assembly site membrane"/>
    <property type="evidence" value="ECO:0007669"/>
    <property type="project" value="UniProtKB-SubCell"/>
</dbReference>
<dbReference type="GO" id="GO:0060090">
    <property type="term" value="F:molecular adaptor activity"/>
    <property type="evidence" value="ECO:0000318"/>
    <property type="project" value="GO_Central"/>
</dbReference>
<dbReference type="GO" id="GO:0030295">
    <property type="term" value="F:protein kinase activator activity"/>
    <property type="evidence" value="ECO:0000318"/>
    <property type="project" value="GO_Central"/>
</dbReference>
<dbReference type="GO" id="GO:0000045">
    <property type="term" value="P:autophagosome assembly"/>
    <property type="evidence" value="ECO:0000318"/>
    <property type="project" value="GO_Central"/>
</dbReference>
<dbReference type="GO" id="GO:0000423">
    <property type="term" value="P:mitophagy"/>
    <property type="evidence" value="ECO:0000318"/>
    <property type="project" value="GO_Central"/>
</dbReference>
<dbReference type="GO" id="GO:0000425">
    <property type="term" value="P:pexophagy"/>
    <property type="evidence" value="ECO:0000318"/>
    <property type="project" value="GO_Central"/>
</dbReference>
<dbReference type="GO" id="GO:0034727">
    <property type="term" value="P:piecemeal microautophagy of the nucleus"/>
    <property type="evidence" value="ECO:0000318"/>
    <property type="project" value="GO_Central"/>
</dbReference>
<dbReference type="InterPro" id="IPR007240">
    <property type="entry name" value="Atg17"/>
</dbReference>
<dbReference type="InterPro" id="IPR045326">
    <property type="entry name" value="ATG17-like_dom"/>
</dbReference>
<dbReference type="PANTHER" id="PTHR28005">
    <property type="entry name" value="AUTOPHAGY-RELATED PROTEIN 17"/>
    <property type="match status" value="1"/>
</dbReference>
<dbReference type="PANTHER" id="PTHR28005:SF1">
    <property type="entry name" value="AUTOPHAGY-RELATED PROTEIN 17"/>
    <property type="match status" value="1"/>
</dbReference>
<dbReference type="Pfam" id="PF04108">
    <property type="entry name" value="ATG17_like"/>
    <property type="match status" value="1"/>
</dbReference>
<name>ATG17_DICDI</name>
<organism>
    <name type="scientific">Dictyostelium discoideum</name>
    <name type="common">Social amoeba</name>
    <dbReference type="NCBI Taxonomy" id="44689"/>
    <lineage>
        <taxon>Eukaryota</taxon>
        <taxon>Amoebozoa</taxon>
        <taxon>Evosea</taxon>
        <taxon>Eumycetozoa</taxon>
        <taxon>Dictyostelia</taxon>
        <taxon>Dictyosteliales</taxon>
        <taxon>Dictyosteliaceae</taxon>
        <taxon>Dictyostelium</taxon>
    </lineage>
</organism>
<protein>
    <recommendedName>
        <fullName>Probable autophagy-related protein 17</fullName>
    </recommendedName>
</protein>
<accession>B0G140</accession>
<proteinExistence type="inferred from homology"/>
<sequence length="488" mass="57014">MDFSSKSLELCKSHSNQTDQLLKISKQTYEKYDNSLSKLHLIIRELNKQLIILKETSTQFNDRYNTFINDFTSLSNQKQSLFTSIENKLEILKKKYLDKGLVFKNNNNNNNNNNNNNNNNNNNSNKSTEDDNNENNNNNDVNKNNNNNNNNNLNTLYDFIDIESLELIKNQFLSELSGLNEICDKSKQIYKSTNESNLEMENRFLEIQKQYNKQIEESNSLSDLLTQQNNLYKTIQNQLINVASQCDFITFYKPSPSPLSPSPSPSSSSSSSSPSPSSPQQQHDFNINNKKEQIQLLLTSSLENIQLMSKNVKDIENQFKESCSIYTLVYLLNEKLSFGNDFSENWETFERFNCIFEQRLAGANYFIGELYSLGKWYDLFDESYDNLLEEVKRRQKEYLRQKTIAEQFNEELKHNYNQEIQNRLKFYDSYGKYLPVSLFSTISDQPISFQVKQIIEESVIDYSFNPLNLKRSSPINQQQQQQQPPPNS</sequence>
<keyword id="KW-0072">Autophagy</keyword>
<keyword id="KW-0963">Cytoplasm</keyword>
<keyword id="KW-0472">Membrane</keyword>
<keyword id="KW-1185">Reference proteome</keyword>